<reference key="1">
    <citation type="journal article" date="2002" name="Proc. Natl. Acad. Sci. U.S.A.">
        <title>Extensive mosaic structure revealed by the complete genome sequence of uropathogenic Escherichia coli.</title>
        <authorList>
            <person name="Welch R.A."/>
            <person name="Burland V."/>
            <person name="Plunkett G. III"/>
            <person name="Redford P."/>
            <person name="Roesch P."/>
            <person name="Rasko D."/>
            <person name="Buckles E.L."/>
            <person name="Liou S.-R."/>
            <person name="Boutin A."/>
            <person name="Hackett J."/>
            <person name="Stroud D."/>
            <person name="Mayhew G.F."/>
            <person name="Rose D.J."/>
            <person name="Zhou S."/>
            <person name="Schwartz D.C."/>
            <person name="Perna N.T."/>
            <person name="Mobley H.L.T."/>
            <person name="Donnenberg M.S."/>
            <person name="Blattner F.R."/>
        </authorList>
    </citation>
    <scope>NUCLEOTIDE SEQUENCE [LARGE SCALE GENOMIC DNA]</scope>
    <source>
        <strain>CFT073 / ATCC 700928 / UPEC</strain>
    </source>
</reference>
<dbReference type="EMBL" id="AE014075">
    <property type="protein sequence ID" value="AAN83684.1"/>
    <property type="molecule type" value="Genomic_DNA"/>
</dbReference>
<dbReference type="RefSeq" id="WP_001177639.1">
    <property type="nucleotide sequence ID" value="NZ_CP051263.1"/>
</dbReference>
<dbReference type="SMR" id="P0AF64"/>
<dbReference type="STRING" id="199310.c5262"/>
<dbReference type="GeneID" id="93777643"/>
<dbReference type="KEGG" id="ecc:c5262"/>
<dbReference type="eggNOG" id="COG1959">
    <property type="taxonomic scope" value="Bacteria"/>
</dbReference>
<dbReference type="HOGENOM" id="CLU_107144_2_1_6"/>
<dbReference type="BioCyc" id="ECOL199310:C5262-MONOMER"/>
<dbReference type="Proteomes" id="UP000001410">
    <property type="component" value="Chromosome"/>
</dbReference>
<dbReference type="GO" id="GO:0005829">
    <property type="term" value="C:cytosol"/>
    <property type="evidence" value="ECO:0007669"/>
    <property type="project" value="TreeGrafter"/>
</dbReference>
<dbReference type="GO" id="GO:0051537">
    <property type="term" value="F:2 iron, 2 sulfur cluster binding"/>
    <property type="evidence" value="ECO:0007669"/>
    <property type="project" value="UniProtKB-KW"/>
</dbReference>
<dbReference type="GO" id="GO:0003700">
    <property type="term" value="F:DNA-binding transcription factor activity"/>
    <property type="evidence" value="ECO:0007669"/>
    <property type="project" value="UniProtKB-UniRule"/>
</dbReference>
<dbReference type="GO" id="GO:0003690">
    <property type="term" value="F:double-stranded DNA binding"/>
    <property type="evidence" value="ECO:0007669"/>
    <property type="project" value="UniProtKB-UniRule"/>
</dbReference>
<dbReference type="GO" id="GO:0005506">
    <property type="term" value="F:iron ion binding"/>
    <property type="evidence" value="ECO:0007669"/>
    <property type="project" value="UniProtKB-UniRule"/>
</dbReference>
<dbReference type="GO" id="GO:0045892">
    <property type="term" value="P:negative regulation of DNA-templated transcription"/>
    <property type="evidence" value="ECO:0007669"/>
    <property type="project" value="InterPro"/>
</dbReference>
<dbReference type="FunFam" id="1.10.10.10:FF:000105">
    <property type="entry name" value="HTH-type transcriptional repressor NsrR"/>
    <property type="match status" value="1"/>
</dbReference>
<dbReference type="Gene3D" id="1.10.10.10">
    <property type="entry name" value="Winged helix-like DNA-binding domain superfamily/Winged helix DNA-binding domain"/>
    <property type="match status" value="1"/>
</dbReference>
<dbReference type="HAMAP" id="MF_01177">
    <property type="entry name" value="HTH_type_NsrR"/>
    <property type="match status" value="1"/>
</dbReference>
<dbReference type="InterPro" id="IPR030489">
    <property type="entry name" value="TR_Rrf2-type_CS"/>
</dbReference>
<dbReference type="InterPro" id="IPR000944">
    <property type="entry name" value="Tscrpt_reg_Rrf2"/>
</dbReference>
<dbReference type="InterPro" id="IPR023761">
    <property type="entry name" value="Tscrpt_rep_HTH_NsrR"/>
</dbReference>
<dbReference type="InterPro" id="IPR036388">
    <property type="entry name" value="WH-like_DNA-bd_sf"/>
</dbReference>
<dbReference type="InterPro" id="IPR036390">
    <property type="entry name" value="WH_DNA-bd_sf"/>
</dbReference>
<dbReference type="NCBIfam" id="NF008240">
    <property type="entry name" value="PRK11014.1"/>
    <property type="match status" value="1"/>
</dbReference>
<dbReference type="NCBIfam" id="TIGR00738">
    <property type="entry name" value="rrf2_super"/>
    <property type="match status" value="1"/>
</dbReference>
<dbReference type="PANTHER" id="PTHR33221:SF4">
    <property type="entry name" value="HTH-TYPE TRANSCRIPTIONAL REPRESSOR NSRR"/>
    <property type="match status" value="1"/>
</dbReference>
<dbReference type="PANTHER" id="PTHR33221">
    <property type="entry name" value="WINGED HELIX-TURN-HELIX TRANSCRIPTIONAL REGULATOR, RRF2 FAMILY"/>
    <property type="match status" value="1"/>
</dbReference>
<dbReference type="Pfam" id="PF02082">
    <property type="entry name" value="Rrf2"/>
    <property type="match status" value="1"/>
</dbReference>
<dbReference type="SUPFAM" id="SSF46785">
    <property type="entry name" value="Winged helix' DNA-binding domain"/>
    <property type="match status" value="1"/>
</dbReference>
<dbReference type="PROSITE" id="PS01332">
    <property type="entry name" value="HTH_RRF2_1"/>
    <property type="match status" value="1"/>
</dbReference>
<dbReference type="PROSITE" id="PS51197">
    <property type="entry name" value="HTH_RRF2_2"/>
    <property type="match status" value="1"/>
</dbReference>
<proteinExistence type="inferred from homology"/>
<keyword id="KW-0001">2Fe-2S</keyword>
<keyword id="KW-0238">DNA-binding</keyword>
<keyword id="KW-0408">Iron</keyword>
<keyword id="KW-0411">Iron-sulfur</keyword>
<keyword id="KW-0479">Metal-binding</keyword>
<keyword id="KW-1185">Reference proteome</keyword>
<keyword id="KW-0678">Repressor</keyword>
<keyword id="KW-0804">Transcription</keyword>
<keyword id="KW-0805">Transcription regulation</keyword>
<evidence type="ECO:0000255" key="1">
    <source>
        <dbReference type="HAMAP-Rule" id="MF_01177"/>
    </source>
</evidence>
<sequence length="141" mass="15593">MQLTSFTDYGLRALIYMASLPEGRMTSISEVTDVYGVSRNHMVKIINQLSRAGYVTAVRGKNGGIRLGKPASAIRIGDVVRELEPLSLVNCSSEFCHITPACRLKQALSKAVQSFLTELDNYTLADLVEENQPLYKLLLVE</sequence>
<name>NSRR_ECOL6</name>
<gene>
    <name evidence="1" type="primary">nsrR</name>
    <name type="ordered locus">c5262</name>
</gene>
<feature type="chain" id="PRO_0000109557" description="HTH-type transcriptional repressor NsrR">
    <location>
        <begin position="1"/>
        <end position="141"/>
    </location>
</feature>
<feature type="domain" description="HTH rrf2-type" evidence="1">
    <location>
        <begin position="2"/>
        <end position="129"/>
    </location>
</feature>
<feature type="DNA-binding region" description="H-T-H motif" evidence="1">
    <location>
        <begin position="28"/>
        <end position="51"/>
    </location>
</feature>
<feature type="binding site" evidence="1">
    <location>
        <position position="91"/>
    </location>
    <ligand>
        <name>[2Fe-2S] cluster</name>
        <dbReference type="ChEBI" id="CHEBI:190135"/>
    </ligand>
</feature>
<feature type="binding site" evidence="1">
    <location>
        <position position="96"/>
    </location>
    <ligand>
        <name>[2Fe-2S] cluster</name>
        <dbReference type="ChEBI" id="CHEBI:190135"/>
    </ligand>
</feature>
<feature type="binding site" evidence="1">
    <location>
        <position position="102"/>
    </location>
    <ligand>
        <name>[2Fe-2S] cluster</name>
        <dbReference type="ChEBI" id="CHEBI:190135"/>
    </ligand>
</feature>
<organism>
    <name type="scientific">Escherichia coli O6:H1 (strain CFT073 / ATCC 700928 / UPEC)</name>
    <dbReference type="NCBI Taxonomy" id="199310"/>
    <lineage>
        <taxon>Bacteria</taxon>
        <taxon>Pseudomonadati</taxon>
        <taxon>Pseudomonadota</taxon>
        <taxon>Gammaproteobacteria</taxon>
        <taxon>Enterobacterales</taxon>
        <taxon>Enterobacteriaceae</taxon>
        <taxon>Escherichia</taxon>
    </lineage>
</organism>
<protein>
    <recommendedName>
        <fullName evidence="1">HTH-type transcriptional repressor NsrR</fullName>
    </recommendedName>
</protein>
<accession>P0AF64</accession>
<accession>P21498</accession>
<accession>P72442</accession>
<comment type="function">
    <text evidence="1">Nitric oxide-sensitive repressor of genes involved in protecting the cell against nitrosative stress. May require iron for activity.</text>
</comment>
<comment type="cofactor">
    <cofactor evidence="1">
        <name>[2Fe-2S] cluster</name>
        <dbReference type="ChEBI" id="CHEBI:190135"/>
    </cofactor>
    <text evidence="1">Binds 1 [2Fe-2S] cluster per subunit.</text>
</comment>